<sequence>MGKIIGIDLGTTNSCVSIMDGGKARVIENSEGDRTTPSIVAYTKDGEVLVGASAKRQAVTNPKNTFYAVKRLIGRKFTDAEVQKDISHVPYGILAHDNGDAWVQTSDAKRMAPQEISARVLEKMKKTAEDYLGEKVTEAVITVPAYFNDSQRQATKDAGRIAGLDVKRIINEPTAAALAYGLDKKGGDRKIAVYDLGGGTFDVSIIEIAEVDGEKQFEVLATNGDTFLGGEDFDNRVIEYLVDEFNKDQGIDLRKDPLALQRLKDAAERAKIELSSSQQTEVNLPYVTADASGPKHLNIKLTRAKLEALVEDLVKKSIEPCRTALNDAGLRASDINEVILVGGQTRMPKVQQAVADFFGKEPRKDVNPDEAVAVGAAIQGGVLAGDVKDVLLLDVTPLSLGIETMGGVFTKIIEKNTTIPTKASQTFSTAEDNQSAVTVHVLQGEREQARFNKSLAKFDLSGIEPAPRGMPQVEVSFDIDANGILHVSAKDKKTNKEQKVEIKAGSGLSDEEIQRMVADAEANREEDKKFHELVQARNQADGLIHATRTAITEHGSKVGGDVIGKVEAALSDLETAVKGDDKAQIEARTKTLEEAGQSLYAAAAAAEQGGSADAASGNAQASKAADDVVDAEFTEVKDDKK</sequence>
<organism>
    <name type="scientific">Xanthomonas oryzae pv. oryzae (strain KACC10331 / KXO85)</name>
    <dbReference type="NCBI Taxonomy" id="291331"/>
    <lineage>
        <taxon>Bacteria</taxon>
        <taxon>Pseudomonadati</taxon>
        <taxon>Pseudomonadota</taxon>
        <taxon>Gammaproteobacteria</taxon>
        <taxon>Lysobacterales</taxon>
        <taxon>Lysobacteraceae</taxon>
        <taxon>Xanthomonas</taxon>
    </lineage>
</organism>
<comment type="function">
    <text evidence="1">Acts as a chaperone.</text>
</comment>
<comment type="induction">
    <text evidence="1">By stress conditions e.g. heat shock.</text>
</comment>
<comment type="similarity">
    <text evidence="1">Belongs to the heat shock protein 70 family.</text>
</comment>
<accession>Q5H186</accession>
<keyword id="KW-0067">ATP-binding</keyword>
<keyword id="KW-0143">Chaperone</keyword>
<keyword id="KW-0547">Nucleotide-binding</keyword>
<keyword id="KW-0597">Phosphoprotein</keyword>
<keyword id="KW-1185">Reference proteome</keyword>
<keyword id="KW-0346">Stress response</keyword>
<feature type="chain" id="PRO_0000226032" description="Chaperone protein DnaK">
    <location>
        <begin position="1"/>
        <end position="641"/>
    </location>
</feature>
<feature type="region of interest" description="Disordered" evidence="2">
    <location>
        <begin position="605"/>
        <end position="628"/>
    </location>
</feature>
<feature type="compositionally biased region" description="Low complexity" evidence="2">
    <location>
        <begin position="605"/>
        <end position="623"/>
    </location>
</feature>
<feature type="modified residue" description="Phosphothreonine; by autocatalysis" evidence="1">
    <location>
        <position position="200"/>
    </location>
</feature>
<name>DNAK_XANOR</name>
<dbReference type="EMBL" id="AE013598">
    <property type="protein sequence ID" value="AAW75285.1"/>
    <property type="molecule type" value="Genomic_DNA"/>
</dbReference>
<dbReference type="SMR" id="Q5H186"/>
<dbReference type="STRING" id="291331.XOO2031"/>
<dbReference type="KEGG" id="xoo:XOO2031"/>
<dbReference type="HOGENOM" id="CLU_005965_2_1_6"/>
<dbReference type="Proteomes" id="UP000006735">
    <property type="component" value="Chromosome"/>
</dbReference>
<dbReference type="GO" id="GO:0005524">
    <property type="term" value="F:ATP binding"/>
    <property type="evidence" value="ECO:0007669"/>
    <property type="project" value="UniProtKB-UniRule"/>
</dbReference>
<dbReference type="GO" id="GO:0140662">
    <property type="term" value="F:ATP-dependent protein folding chaperone"/>
    <property type="evidence" value="ECO:0007669"/>
    <property type="project" value="InterPro"/>
</dbReference>
<dbReference type="GO" id="GO:0051082">
    <property type="term" value="F:unfolded protein binding"/>
    <property type="evidence" value="ECO:0007669"/>
    <property type="project" value="InterPro"/>
</dbReference>
<dbReference type="CDD" id="cd10234">
    <property type="entry name" value="ASKHA_NBD_HSP70_DnaK-like"/>
    <property type="match status" value="1"/>
</dbReference>
<dbReference type="FunFam" id="2.60.34.10:FF:000014">
    <property type="entry name" value="Chaperone protein DnaK HSP70"/>
    <property type="match status" value="1"/>
</dbReference>
<dbReference type="FunFam" id="1.20.1270.10:FF:000001">
    <property type="entry name" value="Molecular chaperone DnaK"/>
    <property type="match status" value="1"/>
</dbReference>
<dbReference type="FunFam" id="3.30.420.40:FF:000004">
    <property type="entry name" value="Molecular chaperone DnaK"/>
    <property type="match status" value="1"/>
</dbReference>
<dbReference type="FunFam" id="3.90.640.10:FF:000003">
    <property type="entry name" value="Molecular chaperone DnaK"/>
    <property type="match status" value="1"/>
</dbReference>
<dbReference type="Gene3D" id="1.20.1270.10">
    <property type="match status" value="1"/>
</dbReference>
<dbReference type="Gene3D" id="3.30.420.40">
    <property type="match status" value="2"/>
</dbReference>
<dbReference type="Gene3D" id="3.90.640.10">
    <property type="entry name" value="Actin, Chain A, domain 4"/>
    <property type="match status" value="1"/>
</dbReference>
<dbReference type="Gene3D" id="2.60.34.10">
    <property type="entry name" value="Substrate Binding Domain Of DNAk, Chain A, domain 1"/>
    <property type="match status" value="1"/>
</dbReference>
<dbReference type="HAMAP" id="MF_00332">
    <property type="entry name" value="DnaK"/>
    <property type="match status" value="1"/>
</dbReference>
<dbReference type="InterPro" id="IPR043129">
    <property type="entry name" value="ATPase_NBD"/>
</dbReference>
<dbReference type="InterPro" id="IPR012725">
    <property type="entry name" value="Chaperone_DnaK"/>
</dbReference>
<dbReference type="InterPro" id="IPR018181">
    <property type="entry name" value="Heat_shock_70_CS"/>
</dbReference>
<dbReference type="InterPro" id="IPR029048">
    <property type="entry name" value="HSP70_C_sf"/>
</dbReference>
<dbReference type="InterPro" id="IPR029047">
    <property type="entry name" value="HSP70_peptide-bd_sf"/>
</dbReference>
<dbReference type="InterPro" id="IPR013126">
    <property type="entry name" value="Hsp_70_fam"/>
</dbReference>
<dbReference type="NCBIfam" id="NF001413">
    <property type="entry name" value="PRK00290.1"/>
    <property type="match status" value="1"/>
</dbReference>
<dbReference type="NCBIfam" id="NF003520">
    <property type="entry name" value="PRK05183.1"/>
    <property type="match status" value="1"/>
</dbReference>
<dbReference type="NCBIfam" id="TIGR02350">
    <property type="entry name" value="prok_dnaK"/>
    <property type="match status" value="1"/>
</dbReference>
<dbReference type="PANTHER" id="PTHR19375">
    <property type="entry name" value="HEAT SHOCK PROTEIN 70KDA"/>
    <property type="match status" value="1"/>
</dbReference>
<dbReference type="Pfam" id="PF00012">
    <property type="entry name" value="HSP70"/>
    <property type="match status" value="1"/>
</dbReference>
<dbReference type="PRINTS" id="PR00301">
    <property type="entry name" value="HEATSHOCK70"/>
</dbReference>
<dbReference type="SUPFAM" id="SSF53067">
    <property type="entry name" value="Actin-like ATPase domain"/>
    <property type="match status" value="2"/>
</dbReference>
<dbReference type="SUPFAM" id="SSF100920">
    <property type="entry name" value="Heat shock protein 70kD (HSP70), peptide-binding domain"/>
    <property type="match status" value="1"/>
</dbReference>
<dbReference type="PROSITE" id="PS00297">
    <property type="entry name" value="HSP70_1"/>
    <property type="match status" value="1"/>
</dbReference>
<dbReference type="PROSITE" id="PS00329">
    <property type="entry name" value="HSP70_2"/>
    <property type="match status" value="1"/>
</dbReference>
<dbReference type="PROSITE" id="PS01036">
    <property type="entry name" value="HSP70_3"/>
    <property type="match status" value="1"/>
</dbReference>
<reference key="1">
    <citation type="journal article" date="2005" name="Nucleic Acids Res.">
        <title>The genome sequence of Xanthomonas oryzae pathovar oryzae KACC10331, the bacterial blight pathogen of rice.</title>
        <authorList>
            <person name="Lee B.-M."/>
            <person name="Park Y.-J."/>
            <person name="Park D.-S."/>
            <person name="Kang H.-W."/>
            <person name="Kim J.-G."/>
            <person name="Song E.-S."/>
            <person name="Park I.-C."/>
            <person name="Yoon U.-H."/>
            <person name="Hahn J.-H."/>
            <person name="Koo B.-S."/>
            <person name="Lee G.-B."/>
            <person name="Kim H."/>
            <person name="Park H.-S."/>
            <person name="Yoon K.-O."/>
            <person name="Kim J.-H."/>
            <person name="Jung C.-H."/>
            <person name="Koh N.-H."/>
            <person name="Seo J.-S."/>
            <person name="Go S.-J."/>
        </authorList>
    </citation>
    <scope>NUCLEOTIDE SEQUENCE [LARGE SCALE GENOMIC DNA]</scope>
    <source>
        <strain>KACC10331 / KXO85</strain>
    </source>
</reference>
<proteinExistence type="inferred from homology"/>
<evidence type="ECO:0000255" key="1">
    <source>
        <dbReference type="HAMAP-Rule" id="MF_00332"/>
    </source>
</evidence>
<evidence type="ECO:0000256" key="2">
    <source>
        <dbReference type="SAM" id="MobiDB-lite"/>
    </source>
</evidence>
<gene>
    <name evidence="1" type="primary">dnaK</name>
    <name type="ordered locus">XOO2031</name>
</gene>
<protein>
    <recommendedName>
        <fullName evidence="1">Chaperone protein DnaK</fullName>
    </recommendedName>
    <alternativeName>
        <fullName evidence="1">HSP70</fullName>
    </alternativeName>
    <alternativeName>
        <fullName evidence="1">Heat shock 70 kDa protein</fullName>
    </alternativeName>
    <alternativeName>
        <fullName evidence="1">Heat shock protein 70</fullName>
    </alternativeName>
</protein>